<feature type="chain" id="PRO_0000402319" description="Elongation factor Ts, mitochondrial">
    <location>
        <begin position="1"/>
        <end position="291"/>
    </location>
</feature>
<sequence length="291" mass="31901">MDKSLLGKLRKETGFGFSKCREALVLARNDYAAAEAWLHEQAEKEGWQKANKLQGRSATEGLIGVIVNHSDMNLGAMVEVNCETDFVARNENFVDLVNTVTSTTLAYRRGIIQRNQKLNMFGDQVTHLREFILTHELSNLRVEHNNPDSMLLSDMVAKVIGKLGENIKLGKAITITTDSDNVIGSYVHGPYVTKVHQCSFGKYGAMVAVKPIKKGIDTSSLALLANKLAQHVVGMNPKVIGQGGEADEKGGESEALLDQEYLLDGSLTVGQFTEKEGVQVVDFVRYECGAK</sequence>
<gene>
    <name type="ORF">v1g215604</name>
</gene>
<keyword id="KW-0251">Elongation factor</keyword>
<keyword id="KW-0496">Mitochondrion</keyword>
<keyword id="KW-0648">Protein biosynthesis</keyword>
<keyword id="KW-1185">Reference proteome</keyword>
<comment type="function">
    <text evidence="1">Associates with the EF-Tu.GDP complex and induces the exchange of GDP to GTP. It remains bound to the aminoacyl-tRNA.EF-Tu.GTP complex up to the GTP hydrolysis stage on the ribosome.</text>
</comment>
<comment type="subcellular location">
    <subcellularLocation>
        <location evidence="1">Mitochondrion</location>
    </subcellularLocation>
</comment>
<comment type="miscellaneous">
    <text evidence="1">This protein may be expected to contain an N-terminal transit peptide but none has been predicted.</text>
</comment>
<comment type="similarity">
    <text evidence="1">Belongs to the EF-Ts family.</text>
</comment>
<protein>
    <recommendedName>
        <fullName evidence="1">Elongation factor Ts, mitochondrial</fullName>
        <shortName evidence="1">EF-Ts</shortName>
        <shortName evidence="1">EF-TsMt</shortName>
    </recommendedName>
</protein>
<accession>A7SPW6</accession>
<name>EFTS_NEMVE</name>
<evidence type="ECO:0000255" key="1">
    <source>
        <dbReference type="HAMAP-Rule" id="MF_03135"/>
    </source>
</evidence>
<organism>
    <name type="scientific">Nematostella vectensis</name>
    <name type="common">Starlet sea anemone</name>
    <dbReference type="NCBI Taxonomy" id="45351"/>
    <lineage>
        <taxon>Eukaryota</taxon>
        <taxon>Metazoa</taxon>
        <taxon>Cnidaria</taxon>
        <taxon>Anthozoa</taxon>
        <taxon>Hexacorallia</taxon>
        <taxon>Actiniaria</taxon>
        <taxon>Edwardsiidae</taxon>
        <taxon>Nematostella</taxon>
    </lineage>
</organism>
<reference key="1">
    <citation type="journal article" date="2007" name="Science">
        <title>Sea anemone genome reveals ancestral eumetazoan gene repertoire and genomic organization.</title>
        <authorList>
            <person name="Putnam N.H."/>
            <person name="Srivastava M."/>
            <person name="Hellsten U."/>
            <person name="Dirks B."/>
            <person name="Chapman J."/>
            <person name="Salamov A."/>
            <person name="Terry A."/>
            <person name="Shapiro H."/>
            <person name="Lindquist E."/>
            <person name="Kapitonov V.V."/>
            <person name="Jurka J."/>
            <person name="Genikhovich G."/>
            <person name="Grigoriev I.V."/>
            <person name="Lucas S.M."/>
            <person name="Steele R.E."/>
            <person name="Finnerty J.R."/>
            <person name="Technau U."/>
            <person name="Martindale M.Q."/>
            <person name="Rokhsar D.S."/>
        </authorList>
    </citation>
    <scope>NUCLEOTIDE SEQUENCE [LARGE SCALE GENOMIC DNA]</scope>
    <source>
        <strain>CH2 X CH6</strain>
    </source>
</reference>
<dbReference type="EMBL" id="DS469738">
    <property type="protein sequence ID" value="EDO34261.1"/>
    <property type="molecule type" value="Genomic_DNA"/>
</dbReference>
<dbReference type="RefSeq" id="XP_001626361.1">
    <property type="nucleotide sequence ID" value="XM_001626311.1"/>
</dbReference>
<dbReference type="SMR" id="A7SPW6"/>
<dbReference type="STRING" id="45351.A7SPW6"/>
<dbReference type="EnsemblMetazoa" id="EDO34261">
    <property type="protein sequence ID" value="EDO34261"/>
    <property type="gene ID" value="NEMVEDRAFT_v1g215604"/>
</dbReference>
<dbReference type="KEGG" id="nve:5505583"/>
<dbReference type="eggNOG" id="KOG1071">
    <property type="taxonomic scope" value="Eukaryota"/>
</dbReference>
<dbReference type="HOGENOM" id="CLU_047155_4_0_1"/>
<dbReference type="InParanoid" id="A7SPW6"/>
<dbReference type="OMA" id="QEYMLDD"/>
<dbReference type="OrthoDB" id="277235at2759"/>
<dbReference type="PhylomeDB" id="A7SPW6"/>
<dbReference type="Proteomes" id="UP000001593">
    <property type="component" value="Unassembled WGS sequence"/>
</dbReference>
<dbReference type="GO" id="GO:0005739">
    <property type="term" value="C:mitochondrion"/>
    <property type="evidence" value="ECO:0007669"/>
    <property type="project" value="UniProtKB-SubCell"/>
</dbReference>
<dbReference type="GO" id="GO:0003746">
    <property type="term" value="F:translation elongation factor activity"/>
    <property type="evidence" value="ECO:0000318"/>
    <property type="project" value="GO_Central"/>
</dbReference>
<dbReference type="GO" id="GO:0070125">
    <property type="term" value="P:mitochondrial translational elongation"/>
    <property type="evidence" value="ECO:0000318"/>
    <property type="project" value="GO_Central"/>
</dbReference>
<dbReference type="CDD" id="cd14275">
    <property type="entry name" value="UBA_EF-Ts"/>
    <property type="match status" value="1"/>
</dbReference>
<dbReference type="Gene3D" id="1.10.8.10">
    <property type="entry name" value="DNA helicase RuvA subunit, C-terminal domain"/>
    <property type="match status" value="1"/>
</dbReference>
<dbReference type="Gene3D" id="3.30.479.20">
    <property type="entry name" value="Elongation factor Ts, dimerisation domain"/>
    <property type="match status" value="2"/>
</dbReference>
<dbReference type="HAMAP" id="MF_00050">
    <property type="entry name" value="EF_Ts"/>
    <property type="match status" value="1"/>
</dbReference>
<dbReference type="InterPro" id="IPR036402">
    <property type="entry name" value="EF-Ts_dimer_sf"/>
</dbReference>
<dbReference type="InterPro" id="IPR001816">
    <property type="entry name" value="Transl_elong_EFTs/EF1B"/>
</dbReference>
<dbReference type="InterPro" id="IPR014039">
    <property type="entry name" value="Transl_elong_EFTs/EF1B_dimer"/>
</dbReference>
<dbReference type="InterPro" id="IPR018101">
    <property type="entry name" value="Transl_elong_Ts_CS"/>
</dbReference>
<dbReference type="InterPro" id="IPR009060">
    <property type="entry name" value="UBA-like_sf"/>
</dbReference>
<dbReference type="PANTHER" id="PTHR11741">
    <property type="entry name" value="ELONGATION FACTOR TS"/>
    <property type="match status" value="1"/>
</dbReference>
<dbReference type="PANTHER" id="PTHR11741:SF0">
    <property type="entry name" value="ELONGATION FACTOR TS, MITOCHONDRIAL"/>
    <property type="match status" value="1"/>
</dbReference>
<dbReference type="Pfam" id="PF25025">
    <property type="entry name" value="EF-Ts_N"/>
    <property type="match status" value="1"/>
</dbReference>
<dbReference type="Pfam" id="PF00889">
    <property type="entry name" value="EF_TS"/>
    <property type="match status" value="1"/>
</dbReference>
<dbReference type="SUPFAM" id="SSF54713">
    <property type="entry name" value="Elongation factor Ts (EF-Ts), dimerisation domain"/>
    <property type="match status" value="2"/>
</dbReference>
<dbReference type="SUPFAM" id="SSF46934">
    <property type="entry name" value="UBA-like"/>
    <property type="match status" value="1"/>
</dbReference>
<dbReference type="PROSITE" id="PS01127">
    <property type="entry name" value="EF_TS_2"/>
    <property type="match status" value="1"/>
</dbReference>
<proteinExistence type="inferred from homology"/>